<proteinExistence type="inferred from homology"/>
<dbReference type="EMBL" id="AP006841">
    <property type="protein sequence ID" value="BAD50928.1"/>
    <property type="molecule type" value="Genomic_DNA"/>
</dbReference>
<dbReference type="RefSeq" id="WP_005675419.1">
    <property type="nucleotide sequence ID" value="NZ_UYXF01000007.1"/>
</dbReference>
<dbReference type="RefSeq" id="YP_101462.1">
    <property type="nucleotide sequence ID" value="NC_006347.1"/>
</dbReference>
<dbReference type="SMR" id="Q64NK4"/>
<dbReference type="STRING" id="295405.BF4185"/>
<dbReference type="GeneID" id="93105328"/>
<dbReference type="KEGG" id="bfr:BF4185"/>
<dbReference type="PATRIC" id="fig|295405.11.peg.4039"/>
<dbReference type="HOGENOM" id="CLU_104295_1_2_10"/>
<dbReference type="OrthoDB" id="9802366at2"/>
<dbReference type="Proteomes" id="UP000002197">
    <property type="component" value="Chromosome"/>
</dbReference>
<dbReference type="GO" id="GO:0015935">
    <property type="term" value="C:small ribosomal subunit"/>
    <property type="evidence" value="ECO:0007669"/>
    <property type="project" value="InterPro"/>
</dbReference>
<dbReference type="GO" id="GO:0019843">
    <property type="term" value="F:rRNA binding"/>
    <property type="evidence" value="ECO:0007669"/>
    <property type="project" value="UniProtKB-UniRule"/>
</dbReference>
<dbReference type="GO" id="GO:0003735">
    <property type="term" value="F:structural constituent of ribosome"/>
    <property type="evidence" value="ECO:0007669"/>
    <property type="project" value="InterPro"/>
</dbReference>
<dbReference type="GO" id="GO:0000049">
    <property type="term" value="F:tRNA binding"/>
    <property type="evidence" value="ECO:0007669"/>
    <property type="project" value="UniProtKB-UniRule"/>
</dbReference>
<dbReference type="GO" id="GO:0006412">
    <property type="term" value="P:translation"/>
    <property type="evidence" value="ECO:0007669"/>
    <property type="project" value="UniProtKB-UniRule"/>
</dbReference>
<dbReference type="CDD" id="cd03368">
    <property type="entry name" value="Ribosomal_S12"/>
    <property type="match status" value="1"/>
</dbReference>
<dbReference type="FunFam" id="2.40.50.140:FF:000001">
    <property type="entry name" value="30S ribosomal protein S12"/>
    <property type="match status" value="1"/>
</dbReference>
<dbReference type="Gene3D" id="2.40.50.140">
    <property type="entry name" value="Nucleic acid-binding proteins"/>
    <property type="match status" value="1"/>
</dbReference>
<dbReference type="HAMAP" id="MF_00403_B">
    <property type="entry name" value="Ribosomal_uS12_B"/>
    <property type="match status" value="1"/>
</dbReference>
<dbReference type="InterPro" id="IPR012340">
    <property type="entry name" value="NA-bd_OB-fold"/>
</dbReference>
<dbReference type="InterPro" id="IPR006032">
    <property type="entry name" value="Ribosomal_uS12"/>
</dbReference>
<dbReference type="InterPro" id="IPR005679">
    <property type="entry name" value="Ribosomal_uS12_bac"/>
</dbReference>
<dbReference type="NCBIfam" id="TIGR00981">
    <property type="entry name" value="rpsL_bact"/>
    <property type="match status" value="1"/>
</dbReference>
<dbReference type="PANTHER" id="PTHR11652">
    <property type="entry name" value="30S RIBOSOMAL PROTEIN S12 FAMILY MEMBER"/>
    <property type="match status" value="1"/>
</dbReference>
<dbReference type="Pfam" id="PF00164">
    <property type="entry name" value="Ribosom_S12_S23"/>
    <property type="match status" value="1"/>
</dbReference>
<dbReference type="PIRSF" id="PIRSF002133">
    <property type="entry name" value="Ribosomal_S12/S23"/>
    <property type="match status" value="1"/>
</dbReference>
<dbReference type="PRINTS" id="PR01034">
    <property type="entry name" value="RIBOSOMALS12"/>
</dbReference>
<dbReference type="SUPFAM" id="SSF50249">
    <property type="entry name" value="Nucleic acid-binding proteins"/>
    <property type="match status" value="1"/>
</dbReference>
<dbReference type="PROSITE" id="PS00055">
    <property type="entry name" value="RIBOSOMAL_S12"/>
    <property type="match status" value="1"/>
</dbReference>
<evidence type="ECO:0000250" key="1"/>
<evidence type="ECO:0000255" key="2">
    <source>
        <dbReference type="HAMAP-Rule" id="MF_00403"/>
    </source>
</evidence>
<evidence type="ECO:0000256" key="3">
    <source>
        <dbReference type="SAM" id="MobiDB-lite"/>
    </source>
</evidence>
<evidence type="ECO:0000305" key="4"/>
<protein>
    <recommendedName>
        <fullName evidence="2">Small ribosomal subunit protein uS12</fullName>
    </recommendedName>
    <alternativeName>
        <fullName evidence="4">30S ribosomal protein S12</fullName>
    </alternativeName>
</protein>
<comment type="function">
    <text evidence="2">With S4 and S5 plays an important role in translational accuracy.</text>
</comment>
<comment type="function">
    <text evidence="2">Interacts with and stabilizes bases of the 16S rRNA that are involved in tRNA selection in the A site and with the mRNA backbone. Located at the interface of the 30S and 50S subunits, it traverses the body of the 30S subunit contacting proteins on the other side and probably holding the rRNA structure together. The combined cluster of proteins S8, S12 and S17 appears to hold together the shoulder and platform of the 30S subunit.</text>
</comment>
<comment type="subunit">
    <text evidence="2">Part of the 30S ribosomal subunit. Contacts proteins S8 and S17. May interact with IF1 in the 30S initiation complex.</text>
</comment>
<comment type="similarity">
    <text evidence="2">Belongs to the universal ribosomal protein uS12 family.</text>
</comment>
<sequence length="133" mass="14747">MPTIQQLVRKGREVLVEKSKSPALDSCPQRRGVCVRVYTTTPKKPNSAMRKVARVRLTNQKEVNSYIPGEGHNLQEHSIVLVRGGRVKDLPGVRYHIVRGTLDTAGVAGRTQRRSKYGAKRPKPGQAAPAKKK</sequence>
<accession>Q64NK4</accession>
<keyword id="KW-0488">Methylation</keyword>
<keyword id="KW-0687">Ribonucleoprotein</keyword>
<keyword id="KW-0689">Ribosomal protein</keyword>
<keyword id="KW-0694">RNA-binding</keyword>
<keyword id="KW-0699">rRNA-binding</keyword>
<keyword id="KW-0820">tRNA-binding</keyword>
<feature type="chain" id="PRO_0000146172" description="Small ribosomal subunit protein uS12">
    <location>
        <begin position="1"/>
        <end position="133"/>
    </location>
</feature>
<feature type="region of interest" description="Disordered" evidence="3">
    <location>
        <begin position="103"/>
        <end position="133"/>
    </location>
</feature>
<feature type="compositionally biased region" description="Basic residues" evidence="3">
    <location>
        <begin position="111"/>
        <end position="123"/>
    </location>
</feature>
<feature type="compositionally biased region" description="Low complexity" evidence="3">
    <location>
        <begin position="124"/>
        <end position="133"/>
    </location>
</feature>
<feature type="modified residue" description="3-methylthioaspartic acid" evidence="1">
    <location>
        <position position="89"/>
    </location>
</feature>
<reference key="1">
    <citation type="journal article" date="2004" name="Proc. Natl. Acad. Sci. U.S.A.">
        <title>Genomic analysis of Bacteroides fragilis reveals extensive DNA inversions regulating cell surface adaptation.</title>
        <authorList>
            <person name="Kuwahara T."/>
            <person name="Yamashita A."/>
            <person name="Hirakawa H."/>
            <person name="Nakayama H."/>
            <person name="Toh H."/>
            <person name="Okada N."/>
            <person name="Kuhara S."/>
            <person name="Hattori M."/>
            <person name="Hayashi T."/>
            <person name="Ohnishi Y."/>
        </authorList>
    </citation>
    <scope>NUCLEOTIDE SEQUENCE [LARGE SCALE GENOMIC DNA]</scope>
    <source>
        <strain>YCH46</strain>
    </source>
</reference>
<gene>
    <name evidence="2" type="primary">rpsL</name>
    <name type="ordered locus">BF4185</name>
</gene>
<organism>
    <name type="scientific">Bacteroides fragilis (strain YCH46)</name>
    <dbReference type="NCBI Taxonomy" id="295405"/>
    <lineage>
        <taxon>Bacteria</taxon>
        <taxon>Pseudomonadati</taxon>
        <taxon>Bacteroidota</taxon>
        <taxon>Bacteroidia</taxon>
        <taxon>Bacteroidales</taxon>
        <taxon>Bacteroidaceae</taxon>
        <taxon>Bacteroides</taxon>
    </lineage>
</organism>
<name>RS12_BACFR</name>